<accession>Q2YLI4</accession>
<protein>
    <recommendedName>
        <fullName evidence="1">ATP synthase subunit delta</fullName>
    </recommendedName>
    <alternativeName>
        <fullName evidence="1">ATP synthase F(1) sector subunit delta</fullName>
    </alternativeName>
    <alternativeName>
        <fullName evidence="1">F-type ATPase subunit delta</fullName>
        <shortName evidence="1">F-ATPase subunit delta</shortName>
    </alternativeName>
</protein>
<sequence length="186" mass="19648">MAETSSLISGVAQRYAGSLFEHALDANSVASVEKDLGRFEALLSGSEDLRRLISSPVFSSEDQLHAIGAIADKAGIKGLVGNFLRVVAQNRRLFALPGIIAAFRQIAAEHRGEISADVVSAHELTSAQQNELKATLKGVAGKDVTINVTVDPSILGGLIVKMGSRQIDTSLRTKLSSLKLALKEVG</sequence>
<evidence type="ECO:0000255" key="1">
    <source>
        <dbReference type="HAMAP-Rule" id="MF_01416"/>
    </source>
</evidence>
<keyword id="KW-0066">ATP synthesis</keyword>
<keyword id="KW-0997">Cell inner membrane</keyword>
<keyword id="KW-1003">Cell membrane</keyword>
<keyword id="KW-0139">CF(1)</keyword>
<keyword id="KW-0375">Hydrogen ion transport</keyword>
<keyword id="KW-0406">Ion transport</keyword>
<keyword id="KW-0472">Membrane</keyword>
<keyword id="KW-1185">Reference proteome</keyword>
<keyword id="KW-0813">Transport</keyword>
<comment type="function">
    <text evidence="1">F(1)F(0) ATP synthase produces ATP from ADP in the presence of a proton or sodium gradient. F-type ATPases consist of two structural domains, F(1) containing the extramembraneous catalytic core and F(0) containing the membrane proton channel, linked together by a central stalk and a peripheral stalk. During catalysis, ATP synthesis in the catalytic domain of F(1) is coupled via a rotary mechanism of the central stalk subunits to proton translocation.</text>
</comment>
<comment type="function">
    <text evidence="1">This protein is part of the stalk that links CF(0) to CF(1). It either transmits conformational changes from CF(0) to CF(1) or is implicated in proton conduction.</text>
</comment>
<comment type="subunit">
    <text evidence="1">F-type ATPases have 2 components, F(1) - the catalytic core - and F(0) - the membrane proton channel. F(1) has five subunits: alpha(3), beta(3), gamma(1), delta(1), epsilon(1). F(0) has three main subunits: a(1), b(2) and c(10-14). The alpha and beta chains form an alternating ring which encloses part of the gamma chain. F(1) is attached to F(0) by a central stalk formed by the gamma and epsilon chains, while a peripheral stalk is formed by the delta and b chains.</text>
</comment>
<comment type="subcellular location">
    <subcellularLocation>
        <location evidence="1">Cell inner membrane</location>
        <topology evidence="1">Peripheral membrane protein</topology>
    </subcellularLocation>
</comment>
<comment type="similarity">
    <text evidence="1">Belongs to the ATPase delta chain family.</text>
</comment>
<proteinExistence type="inferred from homology"/>
<feature type="chain" id="PRO_0000370909" description="ATP synthase subunit delta">
    <location>
        <begin position="1"/>
        <end position="186"/>
    </location>
</feature>
<organism>
    <name type="scientific">Brucella abortus (strain 2308)</name>
    <dbReference type="NCBI Taxonomy" id="359391"/>
    <lineage>
        <taxon>Bacteria</taxon>
        <taxon>Pseudomonadati</taxon>
        <taxon>Pseudomonadota</taxon>
        <taxon>Alphaproteobacteria</taxon>
        <taxon>Hyphomicrobiales</taxon>
        <taxon>Brucellaceae</taxon>
        <taxon>Brucella/Ochrobactrum group</taxon>
        <taxon>Brucella</taxon>
    </lineage>
</organism>
<gene>
    <name evidence="1" type="primary">atpH</name>
    <name type="ordered locus">BAB1_1810</name>
</gene>
<reference key="1">
    <citation type="journal article" date="2005" name="Infect. Immun.">
        <title>Whole-genome analyses of speciation events in pathogenic Brucellae.</title>
        <authorList>
            <person name="Chain P.S."/>
            <person name="Comerci D.J."/>
            <person name="Tolmasky M.E."/>
            <person name="Larimer F.W."/>
            <person name="Malfatti S.A."/>
            <person name="Vergez L.M."/>
            <person name="Aguero F."/>
            <person name="Land M.L."/>
            <person name="Ugalde R.A."/>
            <person name="Garcia E."/>
        </authorList>
    </citation>
    <scope>NUCLEOTIDE SEQUENCE [LARGE SCALE GENOMIC DNA]</scope>
    <source>
        <strain>2308</strain>
    </source>
</reference>
<name>ATPD_BRUA2</name>
<dbReference type="EMBL" id="AM040264">
    <property type="protein sequence ID" value="CAJ11766.1"/>
    <property type="molecule type" value="Genomic_DNA"/>
</dbReference>
<dbReference type="RefSeq" id="WP_002964879.1">
    <property type="nucleotide sequence ID" value="NZ_KN046823.1"/>
</dbReference>
<dbReference type="SMR" id="Q2YLI4"/>
<dbReference type="STRING" id="359391.BAB1_1810"/>
<dbReference type="KEGG" id="bmf:BAB1_1810"/>
<dbReference type="PATRIC" id="fig|359391.11.peg.320"/>
<dbReference type="HOGENOM" id="CLU_085114_0_1_5"/>
<dbReference type="PhylomeDB" id="Q2YLI4"/>
<dbReference type="Proteomes" id="UP000002719">
    <property type="component" value="Chromosome I"/>
</dbReference>
<dbReference type="GO" id="GO:0005886">
    <property type="term" value="C:plasma membrane"/>
    <property type="evidence" value="ECO:0007669"/>
    <property type="project" value="UniProtKB-SubCell"/>
</dbReference>
<dbReference type="GO" id="GO:0045259">
    <property type="term" value="C:proton-transporting ATP synthase complex"/>
    <property type="evidence" value="ECO:0007669"/>
    <property type="project" value="UniProtKB-KW"/>
</dbReference>
<dbReference type="GO" id="GO:0046933">
    <property type="term" value="F:proton-transporting ATP synthase activity, rotational mechanism"/>
    <property type="evidence" value="ECO:0007669"/>
    <property type="project" value="UniProtKB-UniRule"/>
</dbReference>
<dbReference type="Gene3D" id="1.10.520.20">
    <property type="entry name" value="N-terminal domain of the delta subunit of the F1F0-ATP synthase"/>
    <property type="match status" value="1"/>
</dbReference>
<dbReference type="HAMAP" id="MF_01416">
    <property type="entry name" value="ATP_synth_delta_bact"/>
    <property type="match status" value="1"/>
</dbReference>
<dbReference type="InterPro" id="IPR026015">
    <property type="entry name" value="ATP_synth_OSCP/delta_N_sf"/>
</dbReference>
<dbReference type="InterPro" id="IPR020781">
    <property type="entry name" value="ATPase_OSCP/d_CS"/>
</dbReference>
<dbReference type="InterPro" id="IPR000711">
    <property type="entry name" value="ATPase_OSCP/dsu"/>
</dbReference>
<dbReference type="NCBIfam" id="TIGR01145">
    <property type="entry name" value="ATP_synt_delta"/>
    <property type="match status" value="1"/>
</dbReference>
<dbReference type="NCBIfam" id="NF004402">
    <property type="entry name" value="PRK05758.2-2"/>
    <property type="match status" value="1"/>
</dbReference>
<dbReference type="NCBIfam" id="NF004406">
    <property type="entry name" value="PRK05758.3-2"/>
    <property type="match status" value="1"/>
</dbReference>
<dbReference type="PANTHER" id="PTHR11910">
    <property type="entry name" value="ATP SYNTHASE DELTA CHAIN"/>
    <property type="match status" value="1"/>
</dbReference>
<dbReference type="Pfam" id="PF00213">
    <property type="entry name" value="OSCP"/>
    <property type="match status" value="1"/>
</dbReference>
<dbReference type="PRINTS" id="PR00125">
    <property type="entry name" value="ATPASEDELTA"/>
</dbReference>
<dbReference type="SUPFAM" id="SSF47928">
    <property type="entry name" value="N-terminal domain of the delta subunit of the F1F0-ATP synthase"/>
    <property type="match status" value="1"/>
</dbReference>
<dbReference type="PROSITE" id="PS00389">
    <property type="entry name" value="ATPASE_DELTA"/>
    <property type="match status" value="1"/>
</dbReference>